<feature type="chain" id="PRO_1000058653" description="Dihydroorotase">
    <location>
        <begin position="1"/>
        <end position="428"/>
    </location>
</feature>
<feature type="active site" evidence="1">
    <location>
        <position position="304"/>
    </location>
</feature>
<feature type="binding site" evidence="1">
    <location>
        <position position="59"/>
    </location>
    <ligand>
        <name>Zn(2+)</name>
        <dbReference type="ChEBI" id="CHEBI:29105"/>
        <label>1</label>
    </ligand>
</feature>
<feature type="binding site" evidence="1">
    <location>
        <begin position="61"/>
        <end position="63"/>
    </location>
    <ligand>
        <name>substrate</name>
    </ligand>
</feature>
<feature type="binding site" evidence="1">
    <location>
        <position position="61"/>
    </location>
    <ligand>
        <name>Zn(2+)</name>
        <dbReference type="ChEBI" id="CHEBI:29105"/>
        <label>1</label>
    </ligand>
</feature>
<feature type="binding site" evidence="1">
    <location>
        <position position="93"/>
    </location>
    <ligand>
        <name>substrate</name>
    </ligand>
</feature>
<feature type="binding site" evidence="1">
    <location>
        <position position="151"/>
    </location>
    <ligand>
        <name>Zn(2+)</name>
        <dbReference type="ChEBI" id="CHEBI:29105"/>
        <label>1</label>
    </ligand>
</feature>
<feature type="binding site" evidence="1">
    <location>
        <position position="151"/>
    </location>
    <ligand>
        <name>Zn(2+)</name>
        <dbReference type="ChEBI" id="CHEBI:29105"/>
        <label>2</label>
    </ligand>
</feature>
<feature type="binding site" evidence="1">
    <location>
        <position position="178"/>
    </location>
    <ligand>
        <name>Zn(2+)</name>
        <dbReference type="ChEBI" id="CHEBI:29105"/>
        <label>2</label>
    </ligand>
</feature>
<feature type="binding site" evidence="1">
    <location>
        <position position="231"/>
    </location>
    <ligand>
        <name>Zn(2+)</name>
        <dbReference type="ChEBI" id="CHEBI:29105"/>
        <label>2</label>
    </ligand>
</feature>
<feature type="binding site" evidence="1">
    <location>
        <position position="277"/>
    </location>
    <ligand>
        <name>substrate</name>
    </ligand>
</feature>
<feature type="binding site" evidence="1">
    <location>
        <position position="304"/>
    </location>
    <ligand>
        <name>Zn(2+)</name>
        <dbReference type="ChEBI" id="CHEBI:29105"/>
        <label>1</label>
    </ligand>
</feature>
<feature type="binding site" evidence="1">
    <location>
        <position position="308"/>
    </location>
    <ligand>
        <name>substrate</name>
    </ligand>
</feature>
<feature type="binding site" evidence="1">
    <location>
        <begin position="322"/>
        <end position="323"/>
    </location>
    <ligand>
        <name>substrate</name>
    </ligand>
</feature>
<protein>
    <recommendedName>
        <fullName evidence="1">Dihydroorotase</fullName>
        <shortName evidence="1">DHOase</shortName>
        <ecNumber evidence="1">3.5.2.3</ecNumber>
    </recommendedName>
</protein>
<name>PYRC_BACP2</name>
<reference key="1">
    <citation type="journal article" date="2007" name="PLoS ONE">
        <title>Paradoxical DNA repair and peroxide resistance gene conservation in Bacillus pumilus SAFR-032.</title>
        <authorList>
            <person name="Gioia J."/>
            <person name="Yerrapragada S."/>
            <person name="Qin X."/>
            <person name="Jiang H."/>
            <person name="Igboeli O.C."/>
            <person name="Muzny D."/>
            <person name="Dugan-Rocha S."/>
            <person name="Ding Y."/>
            <person name="Hawes A."/>
            <person name="Liu W."/>
            <person name="Perez L."/>
            <person name="Kovar C."/>
            <person name="Dinh H."/>
            <person name="Lee S."/>
            <person name="Nazareth L."/>
            <person name="Blyth P."/>
            <person name="Holder M."/>
            <person name="Buhay C."/>
            <person name="Tirumalai M.R."/>
            <person name="Liu Y."/>
            <person name="Dasgupta I."/>
            <person name="Bokhetache L."/>
            <person name="Fujita M."/>
            <person name="Karouia F."/>
            <person name="Eswara Moorthy P."/>
            <person name="Siefert J."/>
            <person name="Uzman A."/>
            <person name="Buzumbo P."/>
            <person name="Verma A."/>
            <person name="Zwiya H."/>
            <person name="McWilliams B.D."/>
            <person name="Olowu A."/>
            <person name="Clinkenbeard K.D."/>
            <person name="Newcombe D."/>
            <person name="Golebiewski L."/>
            <person name="Petrosino J.F."/>
            <person name="Nicholson W.L."/>
            <person name="Fox G.E."/>
            <person name="Venkateswaran K."/>
            <person name="Highlander S.K."/>
            <person name="Weinstock G.M."/>
        </authorList>
    </citation>
    <scope>NUCLEOTIDE SEQUENCE [LARGE SCALE GENOMIC DNA]</scope>
    <source>
        <strain>SAFR-032</strain>
    </source>
</reference>
<keyword id="KW-0378">Hydrolase</keyword>
<keyword id="KW-0479">Metal-binding</keyword>
<keyword id="KW-0665">Pyrimidine biosynthesis</keyword>
<keyword id="KW-0862">Zinc</keyword>
<proteinExistence type="inferred from homology"/>
<dbReference type="EC" id="3.5.2.3" evidence="1"/>
<dbReference type="EMBL" id="CP000813">
    <property type="protein sequence ID" value="ABV62132.1"/>
    <property type="molecule type" value="Genomic_DNA"/>
</dbReference>
<dbReference type="RefSeq" id="WP_012009895.1">
    <property type="nucleotide sequence ID" value="NC_009848.4"/>
</dbReference>
<dbReference type="SMR" id="A8FD15"/>
<dbReference type="STRING" id="315750.BPUM_1449"/>
<dbReference type="GeneID" id="23399395"/>
<dbReference type="KEGG" id="bpu:BPUM_1449"/>
<dbReference type="eggNOG" id="COG0044">
    <property type="taxonomic scope" value="Bacteria"/>
</dbReference>
<dbReference type="HOGENOM" id="CLU_015572_1_0_9"/>
<dbReference type="OrthoDB" id="9765462at2"/>
<dbReference type="UniPathway" id="UPA00070">
    <property type="reaction ID" value="UER00117"/>
</dbReference>
<dbReference type="Proteomes" id="UP000001355">
    <property type="component" value="Chromosome"/>
</dbReference>
<dbReference type="GO" id="GO:0005737">
    <property type="term" value="C:cytoplasm"/>
    <property type="evidence" value="ECO:0007669"/>
    <property type="project" value="TreeGrafter"/>
</dbReference>
<dbReference type="GO" id="GO:0004038">
    <property type="term" value="F:allantoinase activity"/>
    <property type="evidence" value="ECO:0007669"/>
    <property type="project" value="TreeGrafter"/>
</dbReference>
<dbReference type="GO" id="GO:0004151">
    <property type="term" value="F:dihydroorotase activity"/>
    <property type="evidence" value="ECO:0007669"/>
    <property type="project" value="UniProtKB-UniRule"/>
</dbReference>
<dbReference type="GO" id="GO:0008270">
    <property type="term" value="F:zinc ion binding"/>
    <property type="evidence" value="ECO:0007669"/>
    <property type="project" value="UniProtKB-UniRule"/>
</dbReference>
<dbReference type="GO" id="GO:0044205">
    <property type="term" value="P:'de novo' UMP biosynthetic process"/>
    <property type="evidence" value="ECO:0007669"/>
    <property type="project" value="UniProtKB-UniRule"/>
</dbReference>
<dbReference type="GO" id="GO:0006145">
    <property type="term" value="P:purine nucleobase catabolic process"/>
    <property type="evidence" value="ECO:0007669"/>
    <property type="project" value="TreeGrafter"/>
</dbReference>
<dbReference type="CDD" id="cd01317">
    <property type="entry name" value="DHOase_IIa"/>
    <property type="match status" value="1"/>
</dbReference>
<dbReference type="Gene3D" id="3.20.20.140">
    <property type="entry name" value="Metal-dependent hydrolases"/>
    <property type="match status" value="1"/>
</dbReference>
<dbReference type="Gene3D" id="2.30.40.10">
    <property type="entry name" value="Urease, subunit C, domain 1"/>
    <property type="match status" value="1"/>
</dbReference>
<dbReference type="HAMAP" id="MF_00220_B">
    <property type="entry name" value="PyrC_classI_B"/>
    <property type="match status" value="1"/>
</dbReference>
<dbReference type="InterPro" id="IPR006680">
    <property type="entry name" value="Amidohydro-rel"/>
</dbReference>
<dbReference type="InterPro" id="IPR004722">
    <property type="entry name" value="DHOase"/>
</dbReference>
<dbReference type="InterPro" id="IPR050138">
    <property type="entry name" value="DHOase/Allantoinase_Hydrolase"/>
</dbReference>
<dbReference type="InterPro" id="IPR002195">
    <property type="entry name" value="Dihydroorotase_CS"/>
</dbReference>
<dbReference type="InterPro" id="IPR011059">
    <property type="entry name" value="Metal-dep_hydrolase_composite"/>
</dbReference>
<dbReference type="InterPro" id="IPR032466">
    <property type="entry name" value="Metal_Hydrolase"/>
</dbReference>
<dbReference type="NCBIfam" id="NF006837">
    <property type="entry name" value="PRK09357.1-2"/>
    <property type="match status" value="1"/>
</dbReference>
<dbReference type="NCBIfam" id="TIGR00857">
    <property type="entry name" value="pyrC_multi"/>
    <property type="match status" value="1"/>
</dbReference>
<dbReference type="PANTHER" id="PTHR43668">
    <property type="entry name" value="ALLANTOINASE"/>
    <property type="match status" value="1"/>
</dbReference>
<dbReference type="PANTHER" id="PTHR43668:SF2">
    <property type="entry name" value="ALLANTOINASE"/>
    <property type="match status" value="1"/>
</dbReference>
<dbReference type="Pfam" id="PF01979">
    <property type="entry name" value="Amidohydro_1"/>
    <property type="match status" value="1"/>
</dbReference>
<dbReference type="SUPFAM" id="SSF51338">
    <property type="entry name" value="Composite domain of metallo-dependent hydrolases"/>
    <property type="match status" value="1"/>
</dbReference>
<dbReference type="SUPFAM" id="SSF51556">
    <property type="entry name" value="Metallo-dependent hydrolases"/>
    <property type="match status" value="1"/>
</dbReference>
<dbReference type="PROSITE" id="PS00482">
    <property type="entry name" value="DIHYDROOROTASE_1"/>
    <property type="match status" value="1"/>
</dbReference>
<dbReference type="PROSITE" id="PS00483">
    <property type="entry name" value="DIHYDROOROTASE_2"/>
    <property type="match status" value="1"/>
</dbReference>
<organism>
    <name type="scientific">Bacillus pumilus (strain SAFR-032)</name>
    <dbReference type="NCBI Taxonomy" id="315750"/>
    <lineage>
        <taxon>Bacteria</taxon>
        <taxon>Bacillati</taxon>
        <taxon>Bacillota</taxon>
        <taxon>Bacilli</taxon>
        <taxon>Bacillales</taxon>
        <taxon>Bacillaceae</taxon>
        <taxon>Bacillus</taxon>
    </lineage>
</organism>
<gene>
    <name evidence="1" type="primary">pyrC</name>
    <name type="ordered locus">BPUM_1449</name>
</gene>
<accession>A8FD15</accession>
<evidence type="ECO:0000255" key="1">
    <source>
        <dbReference type="HAMAP-Rule" id="MF_00220"/>
    </source>
</evidence>
<sequence>MSYLIKNGFILTSTGEKVQQDIRVEGEVIQAIGHLEREDGEEVIDAKGLFVSPGLIDLHVHLREPGGEKKETIETGSKAAARGGYTTIAAMPNTRPVPDTKEQMEWLMNRIEETSSVRVLPYASITTRQIGEEMTDFAALKEAGAFAFTDDGVGIQTAGMMYEAMKKAASLDQAIVAHCEDNSLIYGGCVHEGEFSKANGLNGIPSICESVHIARDVLLAEAANCHYHVCHISTKESVRVVRDAKKAGIRVTAEVSPHHLLLCDADIPGLDTNYKMNPPLRGKEDREALIEGLLDGTIDFIATDHAPHTEEEKNETMQRAPFGIVGLETAFPLLYTRFVKTGEWTLKELVDYMTIKPAEAFSLPYGKLEKGQIADITLIDLNKEMAIDKKSFLSKGQNTPFDKLTVSGWPVMTLASGKVVYEEGRLVK</sequence>
<comment type="function">
    <text evidence="1">Catalyzes the reversible cyclization of carbamoyl aspartate to dihydroorotate.</text>
</comment>
<comment type="catalytic activity">
    <reaction evidence="1">
        <text>(S)-dihydroorotate + H2O = N-carbamoyl-L-aspartate + H(+)</text>
        <dbReference type="Rhea" id="RHEA:24296"/>
        <dbReference type="ChEBI" id="CHEBI:15377"/>
        <dbReference type="ChEBI" id="CHEBI:15378"/>
        <dbReference type="ChEBI" id="CHEBI:30864"/>
        <dbReference type="ChEBI" id="CHEBI:32814"/>
        <dbReference type="EC" id="3.5.2.3"/>
    </reaction>
</comment>
<comment type="cofactor">
    <cofactor evidence="1">
        <name>Zn(2+)</name>
        <dbReference type="ChEBI" id="CHEBI:29105"/>
    </cofactor>
    <text evidence="1">Binds 2 Zn(2+) ions per subunit.</text>
</comment>
<comment type="pathway">
    <text evidence="1">Pyrimidine metabolism; UMP biosynthesis via de novo pathway; (S)-dihydroorotate from bicarbonate: step 3/3.</text>
</comment>
<comment type="similarity">
    <text evidence="1">Belongs to the metallo-dependent hydrolases superfamily. DHOase family. Class I DHOase subfamily.</text>
</comment>